<sequence>MSLVEPTEPVEVDKLGRVHFIGMGGAGMSGIARVLLQRGVEVSGSDARDSALLRELEELGATVHVGHAAEHVGDADTVVVSSAIRDTNPELVEARARNLRILPRAAALGALLLGRCGVAVAGTHGKTTTTSMITVVLQHLGAMPGYVIGGQLVTTGLGADAGADDIIVVEADESDGSFLMLSPRVAVITNVEADHLDNYGDLEEIHDKFAAFIGRVSETVVVGVDDPGARRVAEVARQRGLKVLTYGEADTADYRVRDITVDGFTTMFTIDPPTGDPVHCTLPLPGRHNTLNAAAAVAVADTIGYDPEVAVEGLAEFAGAARRFEFKGEANGVSVYDSYAHHPTEIAADLDAARAALDSQAAKGGKAGRIVVLFQPHLYSRTRIFAEEFAAALTKADEVVVLGIYAAREDPEPGVTAELITERIGHDRVYYRPDRDAAVECVVSVAQPGDIVLTMGAGDVTELGPRIVEALG</sequence>
<reference key="1">
    <citation type="journal article" date="2007" name="J. Bacteriol.">
        <title>Genome sequence and analysis of the soil cellulolytic actinomycete Thermobifida fusca YX.</title>
        <authorList>
            <person name="Lykidis A."/>
            <person name="Mavromatis K."/>
            <person name="Ivanova N."/>
            <person name="Anderson I."/>
            <person name="Land M."/>
            <person name="DiBartolo G."/>
            <person name="Martinez M."/>
            <person name="Lapidus A."/>
            <person name="Lucas S."/>
            <person name="Copeland A."/>
            <person name="Richardson P."/>
            <person name="Wilson D.B."/>
            <person name="Kyrpides N."/>
        </authorList>
    </citation>
    <scope>NUCLEOTIDE SEQUENCE [LARGE SCALE GENOMIC DNA]</scope>
    <source>
        <strain>YX</strain>
    </source>
</reference>
<feature type="chain" id="PRO_0000242611" description="UDP-N-acetylmuramate--L-alanine ligase">
    <location>
        <begin position="1"/>
        <end position="472"/>
    </location>
</feature>
<feature type="binding site" evidence="1">
    <location>
        <begin position="122"/>
        <end position="128"/>
    </location>
    <ligand>
        <name>ATP</name>
        <dbReference type="ChEBI" id="CHEBI:30616"/>
    </ligand>
</feature>
<protein>
    <recommendedName>
        <fullName evidence="1">UDP-N-acetylmuramate--L-alanine ligase</fullName>
        <ecNumber evidence="1">6.3.2.8</ecNumber>
    </recommendedName>
    <alternativeName>
        <fullName evidence="1">UDP-N-acetylmuramoyl-L-alanine synthetase</fullName>
    </alternativeName>
</protein>
<keyword id="KW-0067">ATP-binding</keyword>
<keyword id="KW-0131">Cell cycle</keyword>
<keyword id="KW-0132">Cell division</keyword>
<keyword id="KW-0133">Cell shape</keyword>
<keyword id="KW-0961">Cell wall biogenesis/degradation</keyword>
<keyword id="KW-0963">Cytoplasm</keyword>
<keyword id="KW-0436">Ligase</keyword>
<keyword id="KW-0547">Nucleotide-binding</keyword>
<keyword id="KW-0573">Peptidoglycan synthesis</keyword>
<dbReference type="EC" id="6.3.2.8" evidence="1"/>
<dbReference type="EMBL" id="CP000088">
    <property type="protein sequence ID" value="AAZ55149.1"/>
    <property type="molecule type" value="Genomic_DNA"/>
</dbReference>
<dbReference type="RefSeq" id="WP_011291558.1">
    <property type="nucleotide sequence ID" value="NC_007333.1"/>
</dbReference>
<dbReference type="SMR" id="Q47QW8"/>
<dbReference type="STRING" id="269800.Tfu_1111"/>
<dbReference type="KEGG" id="tfu:Tfu_1111"/>
<dbReference type="eggNOG" id="COG0773">
    <property type="taxonomic scope" value="Bacteria"/>
</dbReference>
<dbReference type="HOGENOM" id="CLU_028104_2_2_11"/>
<dbReference type="OrthoDB" id="9804126at2"/>
<dbReference type="UniPathway" id="UPA00219"/>
<dbReference type="GO" id="GO:0005737">
    <property type="term" value="C:cytoplasm"/>
    <property type="evidence" value="ECO:0007669"/>
    <property type="project" value="UniProtKB-SubCell"/>
</dbReference>
<dbReference type="GO" id="GO:0005524">
    <property type="term" value="F:ATP binding"/>
    <property type="evidence" value="ECO:0007669"/>
    <property type="project" value="UniProtKB-UniRule"/>
</dbReference>
<dbReference type="GO" id="GO:0008763">
    <property type="term" value="F:UDP-N-acetylmuramate-L-alanine ligase activity"/>
    <property type="evidence" value="ECO:0007669"/>
    <property type="project" value="UniProtKB-UniRule"/>
</dbReference>
<dbReference type="GO" id="GO:0051301">
    <property type="term" value="P:cell division"/>
    <property type="evidence" value="ECO:0007669"/>
    <property type="project" value="UniProtKB-KW"/>
</dbReference>
<dbReference type="GO" id="GO:0071555">
    <property type="term" value="P:cell wall organization"/>
    <property type="evidence" value="ECO:0007669"/>
    <property type="project" value="UniProtKB-KW"/>
</dbReference>
<dbReference type="GO" id="GO:0009252">
    <property type="term" value="P:peptidoglycan biosynthetic process"/>
    <property type="evidence" value="ECO:0007669"/>
    <property type="project" value="UniProtKB-UniRule"/>
</dbReference>
<dbReference type="GO" id="GO:0008360">
    <property type="term" value="P:regulation of cell shape"/>
    <property type="evidence" value="ECO:0007669"/>
    <property type="project" value="UniProtKB-KW"/>
</dbReference>
<dbReference type="Gene3D" id="3.90.190.20">
    <property type="entry name" value="Mur ligase, C-terminal domain"/>
    <property type="match status" value="1"/>
</dbReference>
<dbReference type="Gene3D" id="3.40.1190.10">
    <property type="entry name" value="Mur-like, catalytic domain"/>
    <property type="match status" value="1"/>
</dbReference>
<dbReference type="Gene3D" id="3.40.50.720">
    <property type="entry name" value="NAD(P)-binding Rossmann-like Domain"/>
    <property type="match status" value="1"/>
</dbReference>
<dbReference type="HAMAP" id="MF_00046">
    <property type="entry name" value="MurC"/>
    <property type="match status" value="1"/>
</dbReference>
<dbReference type="InterPro" id="IPR036565">
    <property type="entry name" value="Mur-like_cat_sf"/>
</dbReference>
<dbReference type="InterPro" id="IPR004101">
    <property type="entry name" value="Mur_ligase_C"/>
</dbReference>
<dbReference type="InterPro" id="IPR036615">
    <property type="entry name" value="Mur_ligase_C_dom_sf"/>
</dbReference>
<dbReference type="InterPro" id="IPR013221">
    <property type="entry name" value="Mur_ligase_cen"/>
</dbReference>
<dbReference type="InterPro" id="IPR000713">
    <property type="entry name" value="Mur_ligase_N"/>
</dbReference>
<dbReference type="InterPro" id="IPR050061">
    <property type="entry name" value="MurCDEF_pg_biosynth"/>
</dbReference>
<dbReference type="InterPro" id="IPR005758">
    <property type="entry name" value="UDP-N-AcMur_Ala_ligase_MurC"/>
</dbReference>
<dbReference type="NCBIfam" id="TIGR01082">
    <property type="entry name" value="murC"/>
    <property type="match status" value="1"/>
</dbReference>
<dbReference type="PANTHER" id="PTHR43445:SF3">
    <property type="entry name" value="UDP-N-ACETYLMURAMATE--L-ALANINE LIGASE"/>
    <property type="match status" value="1"/>
</dbReference>
<dbReference type="PANTHER" id="PTHR43445">
    <property type="entry name" value="UDP-N-ACETYLMURAMATE--L-ALANINE LIGASE-RELATED"/>
    <property type="match status" value="1"/>
</dbReference>
<dbReference type="Pfam" id="PF01225">
    <property type="entry name" value="Mur_ligase"/>
    <property type="match status" value="1"/>
</dbReference>
<dbReference type="Pfam" id="PF02875">
    <property type="entry name" value="Mur_ligase_C"/>
    <property type="match status" value="1"/>
</dbReference>
<dbReference type="Pfam" id="PF08245">
    <property type="entry name" value="Mur_ligase_M"/>
    <property type="match status" value="1"/>
</dbReference>
<dbReference type="SUPFAM" id="SSF51984">
    <property type="entry name" value="MurCD N-terminal domain"/>
    <property type="match status" value="1"/>
</dbReference>
<dbReference type="SUPFAM" id="SSF53623">
    <property type="entry name" value="MurD-like peptide ligases, catalytic domain"/>
    <property type="match status" value="1"/>
</dbReference>
<dbReference type="SUPFAM" id="SSF53244">
    <property type="entry name" value="MurD-like peptide ligases, peptide-binding domain"/>
    <property type="match status" value="1"/>
</dbReference>
<gene>
    <name evidence="1" type="primary">murC</name>
    <name type="ordered locus">Tfu_1111</name>
</gene>
<name>MURC_THEFY</name>
<organism>
    <name type="scientific">Thermobifida fusca (strain YX)</name>
    <dbReference type="NCBI Taxonomy" id="269800"/>
    <lineage>
        <taxon>Bacteria</taxon>
        <taxon>Bacillati</taxon>
        <taxon>Actinomycetota</taxon>
        <taxon>Actinomycetes</taxon>
        <taxon>Streptosporangiales</taxon>
        <taxon>Nocardiopsidaceae</taxon>
        <taxon>Thermobifida</taxon>
    </lineage>
</organism>
<accession>Q47QW8</accession>
<proteinExistence type="inferred from homology"/>
<evidence type="ECO:0000255" key="1">
    <source>
        <dbReference type="HAMAP-Rule" id="MF_00046"/>
    </source>
</evidence>
<comment type="function">
    <text evidence="1">Cell wall formation.</text>
</comment>
<comment type="catalytic activity">
    <reaction evidence="1">
        <text>UDP-N-acetyl-alpha-D-muramate + L-alanine + ATP = UDP-N-acetyl-alpha-D-muramoyl-L-alanine + ADP + phosphate + H(+)</text>
        <dbReference type="Rhea" id="RHEA:23372"/>
        <dbReference type="ChEBI" id="CHEBI:15378"/>
        <dbReference type="ChEBI" id="CHEBI:30616"/>
        <dbReference type="ChEBI" id="CHEBI:43474"/>
        <dbReference type="ChEBI" id="CHEBI:57972"/>
        <dbReference type="ChEBI" id="CHEBI:70757"/>
        <dbReference type="ChEBI" id="CHEBI:83898"/>
        <dbReference type="ChEBI" id="CHEBI:456216"/>
        <dbReference type="EC" id="6.3.2.8"/>
    </reaction>
</comment>
<comment type="pathway">
    <text evidence="1">Cell wall biogenesis; peptidoglycan biosynthesis.</text>
</comment>
<comment type="subcellular location">
    <subcellularLocation>
        <location evidence="1">Cytoplasm</location>
    </subcellularLocation>
</comment>
<comment type="similarity">
    <text evidence="1">Belongs to the MurCDEF family.</text>
</comment>